<comment type="function">
    <text evidence="2">Ornithine decarboxylase (ODC) antizyme protein that negatively regulates ODC activity and intracellular polyamine biosynthesis and uptake in response to increased intracellular polyamine levels. Binds to ODC monomers, inhibiting the assembly of the functional ODC homodimer, and targets the monomers for ubiquitin-independent proteolytic destruction by the 26S proteasome.</text>
</comment>
<comment type="subunit">
    <text evidence="2">Interacts with ODC1 and thereby sterically blocks ODC homodimerization.</text>
</comment>
<comment type="alternative products">
    <event type="ribosomal frameshifting"/>
    <isoform>
        <id>O42148-1</id>
        <name>1</name>
        <sequence type="displayed"/>
    </isoform>
    <text>A ribosomal frameshift occurs between the codons for Ser-58 and Asp-59. An autoregulatory mechanism enables modulation of frameshifting according to the cellular concentration of polyamines.</text>
</comment>
<comment type="similarity">
    <text evidence="3">Belongs to the ODC antizyme family.</text>
</comment>
<sequence length="216" mass="24315">MVKSSLQRILNSHCFAREKEGNKSTIMPAVLSLSTGQSSSRVPFNCCSNLGPGPRWCSDVPHPPLKIPGGRGNSQRDHNLSANLFYSDNRLNVTEELTSNNRTRILNVQSRLTDAKHISWRAVLNNNNLYIEIPSGALPEGSKDSFAVLLEFAEEQLQVDHVFICFHKNRDDRAALLRTFSFLGFEIVRPGHPLVPKRPDACFMAYTFERDSSEEE</sequence>
<evidence type="ECO:0000250" key="1"/>
<evidence type="ECO:0000250" key="2">
    <source>
        <dbReference type="UniProtKB" id="P54368"/>
    </source>
</evidence>
<evidence type="ECO:0000305" key="3"/>
<feature type="initiator methionine" description="Removed" evidence="1">
    <location>
        <position position="1"/>
    </location>
</feature>
<feature type="chain" id="PRO_0000220853" description="Ornithine decarboxylase antizyme 1">
    <location>
        <begin position="2"/>
        <end position="216"/>
    </location>
</feature>
<reference key="1">
    <citation type="journal article" date="1998" name="Biochim. Biophys. Acta">
        <title>The chicken cDNA for ornithine decarboxylase antizyme.</title>
        <authorList>
            <person name="Drozdowski B.J."/>
            <person name="Gong T.-W.L."/>
            <person name="Lomax M.I."/>
        </authorList>
    </citation>
    <scope>NUCLEOTIDE SEQUENCE [MRNA]</scope>
</reference>
<proteinExistence type="evidence at transcript level"/>
<keyword id="KW-1185">Reference proteome</keyword>
<keyword id="KW-0688">Ribosomal frameshifting</keyword>
<protein>
    <recommendedName>
        <fullName>Ornithine decarboxylase antizyme 1</fullName>
        <shortName>ODC-Az</shortName>
    </recommendedName>
</protein>
<organism>
    <name type="scientific">Gallus gallus</name>
    <name type="common">Chicken</name>
    <dbReference type="NCBI Taxonomy" id="9031"/>
    <lineage>
        <taxon>Eukaryota</taxon>
        <taxon>Metazoa</taxon>
        <taxon>Chordata</taxon>
        <taxon>Craniata</taxon>
        <taxon>Vertebrata</taxon>
        <taxon>Euteleostomi</taxon>
        <taxon>Archelosauria</taxon>
        <taxon>Archosauria</taxon>
        <taxon>Dinosauria</taxon>
        <taxon>Saurischia</taxon>
        <taxon>Theropoda</taxon>
        <taxon>Coelurosauria</taxon>
        <taxon>Aves</taxon>
        <taxon>Neognathae</taxon>
        <taxon>Galloanserae</taxon>
        <taxon>Galliformes</taxon>
        <taxon>Phasianidae</taxon>
        <taxon>Phasianinae</taxon>
        <taxon>Gallus</taxon>
    </lineage>
</organism>
<name>OAZ1_CHICK</name>
<dbReference type="EMBL" id="AF007806">
    <property type="protein sequence ID" value="AAC97533.1"/>
    <property type="molecule type" value="mRNA"/>
</dbReference>
<dbReference type="RefSeq" id="NP_990247.1">
    <molecule id="O42148-1"/>
    <property type="nucleotide sequence ID" value="NM_204916.1"/>
</dbReference>
<dbReference type="SMR" id="O42148"/>
<dbReference type="FunCoup" id="O42148">
    <property type="interactions" value="2093"/>
</dbReference>
<dbReference type="STRING" id="9031.ENSGALP00000055863"/>
<dbReference type="PaxDb" id="9031-ENSGALP00000040427"/>
<dbReference type="GeneID" id="395746"/>
<dbReference type="KEGG" id="gga:395746"/>
<dbReference type="CTD" id="4946"/>
<dbReference type="VEuPathDB" id="HostDB:geneid_395746"/>
<dbReference type="eggNOG" id="KOG4387">
    <property type="taxonomic scope" value="Eukaryota"/>
</dbReference>
<dbReference type="HOGENOM" id="CLU_085486_2_0_1"/>
<dbReference type="InParanoid" id="O42148"/>
<dbReference type="OMA" id="HVDHVFI"/>
<dbReference type="OrthoDB" id="5959761at2759"/>
<dbReference type="PhylomeDB" id="O42148"/>
<dbReference type="Reactome" id="R-GGA-350562">
    <property type="pathway name" value="Regulation of ornithine decarboxylase (ODC)"/>
</dbReference>
<dbReference type="PRO" id="PR:O42148"/>
<dbReference type="Proteomes" id="UP000000539">
    <property type="component" value="Chromosome 28"/>
</dbReference>
<dbReference type="Bgee" id="ENSGALG00000000812">
    <property type="expression patterns" value="Expressed in spermatid and 14 other cell types or tissues"/>
</dbReference>
<dbReference type="GO" id="GO:0005737">
    <property type="term" value="C:cytoplasm"/>
    <property type="evidence" value="ECO:0000318"/>
    <property type="project" value="GO_Central"/>
</dbReference>
<dbReference type="GO" id="GO:0005634">
    <property type="term" value="C:nucleus"/>
    <property type="evidence" value="ECO:0000318"/>
    <property type="project" value="GO_Central"/>
</dbReference>
<dbReference type="GO" id="GO:0008073">
    <property type="term" value="F:ornithine decarboxylase inhibitor activity"/>
    <property type="evidence" value="ECO:0000318"/>
    <property type="project" value="GO_Central"/>
</dbReference>
<dbReference type="GO" id="GO:0045732">
    <property type="term" value="P:positive regulation of protein catabolic process"/>
    <property type="evidence" value="ECO:0000318"/>
    <property type="project" value="GO_Central"/>
</dbReference>
<dbReference type="GO" id="GO:0075523">
    <property type="term" value="P:viral translational frameshifting"/>
    <property type="evidence" value="ECO:0007669"/>
    <property type="project" value="UniProtKB-KW"/>
</dbReference>
<dbReference type="FunFam" id="3.40.630.60:FF:000001">
    <property type="entry name" value="Ornithine decarboxylase antizyme 1"/>
    <property type="match status" value="1"/>
</dbReference>
<dbReference type="Gene3D" id="3.40.630.60">
    <property type="match status" value="1"/>
</dbReference>
<dbReference type="InterPro" id="IPR016181">
    <property type="entry name" value="Acyl_CoA_acyltransferase"/>
</dbReference>
<dbReference type="InterPro" id="IPR002993">
    <property type="entry name" value="ODC_AZ"/>
</dbReference>
<dbReference type="InterPro" id="IPR038581">
    <property type="entry name" value="ODC_AZ_sf"/>
</dbReference>
<dbReference type="PANTHER" id="PTHR10279">
    <property type="entry name" value="ORNITHINE DECARBOXYLASE ANTIZYME"/>
    <property type="match status" value="1"/>
</dbReference>
<dbReference type="PANTHER" id="PTHR10279:SF8">
    <property type="entry name" value="ORNITHINE DECARBOXYLASE ANTIZYME 1"/>
    <property type="match status" value="1"/>
</dbReference>
<dbReference type="Pfam" id="PF02100">
    <property type="entry name" value="ODC_AZ"/>
    <property type="match status" value="1"/>
</dbReference>
<dbReference type="SUPFAM" id="SSF55729">
    <property type="entry name" value="Acyl-CoA N-acyltransferases (Nat)"/>
    <property type="match status" value="1"/>
</dbReference>
<dbReference type="PROSITE" id="PS01337">
    <property type="entry name" value="ODC_AZ"/>
    <property type="match status" value="1"/>
</dbReference>
<accession>O42148</accession>
<gene>
    <name type="primary">OAZ</name>
</gene>